<comment type="function">
    <text evidence="1">Bidirectionally degrades single-stranded DNA into large acid-insoluble oligonucleotides, which are then degraded further into small acid-soluble oligonucleotides.</text>
</comment>
<comment type="catalytic activity">
    <reaction evidence="1">
        <text>Exonucleolytic cleavage in either 5'- to 3'- or 3'- to 5'-direction to yield nucleoside 5'-phosphates.</text>
        <dbReference type="EC" id="3.1.11.6"/>
    </reaction>
</comment>
<comment type="subunit">
    <text evidence="1">Heterooligomer composed of large and small subunits.</text>
</comment>
<comment type="subcellular location">
    <subcellularLocation>
        <location evidence="1">Cytoplasm</location>
    </subcellularLocation>
</comment>
<comment type="similarity">
    <text evidence="1">Belongs to the XseB family.</text>
</comment>
<sequence>MARKPKESSTVDFETTLNQLETIVTRLEAGDLPLEEALKEFENGIKLAKLGQERLQQAEQRIQILLQKSDTAELTDYQPTDE</sequence>
<feature type="chain" id="PRO_0000206970" description="Exodeoxyribonuclease 7 small subunit">
    <location>
        <begin position="1"/>
        <end position="82"/>
    </location>
</feature>
<organism>
    <name type="scientific">Mannheimia succiniciproducens (strain KCTC 0769BP / MBEL55E)</name>
    <dbReference type="NCBI Taxonomy" id="221988"/>
    <lineage>
        <taxon>Bacteria</taxon>
        <taxon>Pseudomonadati</taxon>
        <taxon>Pseudomonadota</taxon>
        <taxon>Gammaproteobacteria</taxon>
        <taxon>Pasteurellales</taxon>
        <taxon>Pasteurellaceae</taxon>
        <taxon>Basfia</taxon>
    </lineage>
</organism>
<name>EX7S_MANSM</name>
<proteinExistence type="inferred from homology"/>
<reference key="1">
    <citation type="journal article" date="2004" name="Nat. Biotechnol.">
        <title>The genome sequence of the capnophilic rumen bacterium Mannheimia succiniciproducens.</title>
        <authorList>
            <person name="Hong S.H."/>
            <person name="Kim J.S."/>
            <person name="Lee S.Y."/>
            <person name="In Y.H."/>
            <person name="Choi S.S."/>
            <person name="Rih J.-K."/>
            <person name="Kim C.H."/>
            <person name="Jeong H."/>
            <person name="Hur C.G."/>
            <person name="Kim J.J."/>
        </authorList>
    </citation>
    <scope>NUCLEOTIDE SEQUENCE [LARGE SCALE GENOMIC DNA]</scope>
    <source>
        <strain>KCTC 0769BP / MBEL55E</strain>
    </source>
</reference>
<gene>
    <name evidence="1" type="primary">xseB</name>
    <name type="ordered locus">MS1061</name>
</gene>
<evidence type="ECO:0000255" key="1">
    <source>
        <dbReference type="HAMAP-Rule" id="MF_00337"/>
    </source>
</evidence>
<protein>
    <recommendedName>
        <fullName evidence="1">Exodeoxyribonuclease 7 small subunit</fullName>
        <ecNumber evidence="1">3.1.11.6</ecNumber>
    </recommendedName>
    <alternativeName>
        <fullName evidence="1">Exodeoxyribonuclease VII small subunit</fullName>
        <shortName evidence="1">Exonuclease VII small subunit</shortName>
    </alternativeName>
</protein>
<accession>Q65TP2</accession>
<dbReference type="EC" id="3.1.11.6" evidence="1"/>
<dbReference type="EMBL" id="AE016827">
    <property type="protein sequence ID" value="AAU37668.1"/>
    <property type="molecule type" value="Genomic_DNA"/>
</dbReference>
<dbReference type="RefSeq" id="WP_011200236.1">
    <property type="nucleotide sequence ID" value="NC_006300.1"/>
</dbReference>
<dbReference type="SMR" id="Q65TP2"/>
<dbReference type="STRING" id="221988.MS1061"/>
<dbReference type="KEGG" id="msu:MS1061"/>
<dbReference type="eggNOG" id="COG1722">
    <property type="taxonomic scope" value="Bacteria"/>
</dbReference>
<dbReference type="HOGENOM" id="CLU_145918_3_3_6"/>
<dbReference type="OrthoDB" id="5591562at2"/>
<dbReference type="Proteomes" id="UP000000607">
    <property type="component" value="Chromosome"/>
</dbReference>
<dbReference type="GO" id="GO:0005829">
    <property type="term" value="C:cytosol"/>
    <property type="evidence" value="ECO:0007669"/>
    <property type="project" value="TreeGrafter"/>
</dbReference>
<dbReference type="GO" id="GO:0009318">
    <property type="term" value="C:exodeoxyribonuclease VII complex"/>
    <property type="evidence" value="ECO:0007669"/>
    <property type="project" value="InterPro"/>
</dbReference>
<dbReference type="GO" id="GO:0008855">
    <property type="term" value="F:exodeoxyribonuclease VII activity"/>
    <property type="evidence" value="ECO:0007669"/>
    <property type="project" value="UniProtKB-UniRule"/>
</dbReference>
<dbReference type="GO" id="GO:0006308">
    <property type="term" value="P:DNA catabolic process"/>
    <property type="evidence" value="ECO:0007669"/>
    <property type="project" value="UniProtKB-UniRule"/>
</dbReference>
<dbReference type="Gene3D" id="1.10.287.1040">
    <property type="entry name" value="Exonuclease VII, small subunit"/>
    <property type="match status" value="1"/>
</dbReference>
<dbReference type="HAMAP" id="MF_00337">
    <property type="entry name" value="Exonuc_7_S"/>
    <property type="match status" value="1"/>
</dbReference>
<dbReference type="InterPro" id="IPR003761">
    <property type="entry name" value="Exonuc_VII_S"/>
</dbReference>
<dbReference type="InterPro" id="IPR037004">
    <property type="entry name" value="Exonuc_VII_ssu_sf"/>
</dbReference>
<dbReference type="NCBIfam" id="NF002137">
    <property type="entry name" value="PRK00977.1-1"/>
    <property type="match status" value="1"/>
</dbReference>
<dbReference type="NCBIfam" id="NF002140">
    <property type="entry name" value="PRK00977.1-4"/>
    <property type="match status" value="1"/>
</dbReference>
<dbReference type="NCBIfam" id="TIGR01280">
    <property type="entry name" value="xseB"/>
    <property type="match status" value="1"/>
</dbReference>
<dbReference type="PANTHER" id="PTHR34137">
    <property type="entry name" value="EXODEOXYRIBONUCLEASE 7 SMALL SUBUNIT"/>
    <property type="match status" value="1"/>
</dbReference>
<dbReference type="PANTHER" id="PTHR34137:SF1">
    <property type="entry name" value="EXODEOXYRIBONUCLEASE 7 SMALL SUBUNIT"/>
    <property type="match status" value="1"/>
</dbReference>
<dbReference type="Pfam" id="PF02609">
    <property type="entry name" value="Exonuc_VII_S"/>
    <property type="match status" value="1"/>
</dbReference>
<dbReference type="PIRSF" id="PIRSF006488">
    <property type="entry name" value="Exonuc_VII_S"/>
    <property type="match status" value="1"/>
</dbReference>
<dbReference type="SUPFAM" id="SSF116842">
    <property type="entry name" value="XseB-like"/>
    <property type="match status" value="1"/>
</dbReference>
<keyword id="KW-0963">Cytoplasm</keyword>
<keyword id="KW-0269">Exonuclease</keyword>
<keyword id="KW-0378">Hydrolase</keyword>
<keyword id="KW-0540">Nuclease</keyword>